<protein>
    <recommendedName>
        <fullName>Actin, cytoplasmic</fullName>
        <ecNumber evidence="1">3.6.4.-</ecNumber>
    </recommendedName>
    <alternativeName>
        <fullName>Actin, micronuclear</fullName>
    </alternativeName>
</protein>
<reference key="1">
    <citation type="journal article" date="1987" name="J. Mol. Biol.">
        <title>Tetrahymena actin. Cloning and sequencing of the Tetrahymena actin gene and identification of its gene product.</title>
        <authorList>
            <person name="Hirono M."/>
            <person name="Endoh H."/>
            <person name="Okada N."/>
            <person name="Numata O."/>
            <person name="Watanabe Y."/>
        </authorList>
    </citation>
    <scope>NUCLEOTIDE SEQUENCE [GENOMIC DNA]</scope>
</reference>
<organism>
    <name type="scientific">Tetrahymena pyriformis</name>
    <dbReference type="NCBI Taxonomy" id="5908"/>
    <lineage>
        <taxon>Eukaryota</taxon>
        <taxon>Sar</taxon>
        <taxon>Alveolata</taxon>
        <taxon>Ciliophora</taxon>
        <taxon>Intramacronucleata</taxon>
        <taxon>Oligohymenophorea</taxon>
        <taxon>Hymenostomatida</taxon>
        <taxon>Tetrahymenina</taxon>
        <taxon>Tetrahymenidae</taxon>
        <taxon>Tetrahymena</taxon>
    </lineage>
</organism>
<comment type="function">
    <text>Actins are highly conserved proteins that are involved in various types of cell motility and are ubiquitously expressed in all eukaryotic cells.</text>
</comment>
<comment type="catalytic activity">
    <reaction evidence="1">
        <text>ATP + H2O = ADP + phosphate + H(+)</text>
        <dbReference type="Rhea" id="RHEA:13065"/>
        <dbReference type="ChEBI" id="CHEBI:15377"/>
        <dbReference type="ChEBI" id="CHEBI:15378"/>
        <dbReference type="ChEBI" id="CHEBI:30616"/>
        <dbReference type="ChEBI" id="CHEBI:43474"/>
        <dbReference type="ChEBI" id="CHEBI:456216"/>
    </reaction>
</comment>
<comment type="subcellular location">
    <subcellularLocation>
        <location>Cytoplasm</location>
        <location>Cytoskeleton</location>
    </subcellularLocation>
</comment>
<comment type="similarity">
    <text evidence="2">Belongs to the actin family.</text>
</comment>
<evidence type="ECO:0000250" key="1">
    <source>
        <dbReference type="UniProtKB" id="P68137"/>
    </source>
</evidence>
<evidence type="ECO:0000305" key="2"/>
<keyword id="KW-0067">ATP-binding</keyword>
<keyword id="KW-0963">Cytoplasm</keyword>
<keyword id="KW-0206">Cytoskeleton</keyword>
<keyword id="KW-0378">Hydrolase</keyword>
<keyword id="KW-0547">Nucleotide-binding</keyword>
<sequence>MTDSDSPAIVIDNGSGMCKAGIAGDDAPRAAFPSIIGRPKMPGIMVGMDQKECYVGEEAQAKRGVLNLKYPIEHGIVTDYDDMEKIWHHCFYNELRVTPEEHPCLLTEAPQNPKLNREKMTKTMFETFNVPSFYVAIQAVLSLYASGRTTGIVVDSGDGVTHTVSIYEGYALPHAILRIDLAGRDLTEYCMKLLYEIGLNFSSTAEREIIRDIKEKLCYVALDYESELKAYKESSTNDKSYELPDGNTITVQDQRFRCPELLFKPAFIGKEFPGIHELTFNSIMKCDVDVRKDLYNNIVLSGGTTMFPGIAERLSKEVSALAPSSMKIKVVAPPERRYSVWIGGSILSSLSTFQTMWITKAEYDESGPSIVHRKCF</sequence>
<name>ACT2_TETPY</name>
<dbReference type="EC" id="3.6.4.-" evidence="1"/>
<dbReference type="EMBL" id="X05195">
    <property type="protein sequence ID" value="CAA28824.1"/>
    <property type="molecule type" value="Genomic_DNA"/>
</dbReference>
<dbReference type="PIR" id="S07284">
    <property type="entry name" value="S07284"/>
</dbReference>
<dbReference type="SMR" id="P10993"/>
<dbReference type="GO" id="GO:0005737">
    <property type="term" value="C:cytoplasm"/>
    <property type="evidence" value="ECO:0007669"/>
    <property type="project" value="UniProtKB-KW"/>
</dbReference>
<dbReference type="GO" id="GO:0005856">
    <property type="term" value="C:cytoskeleton"/>
    <property type="evidence" value="ECO:0007669"/>
    <property type="project" value="UniProtKB-SubCell"/>
</dbReference>
<dbReference type="GO" id="GO:0005524">
    <property type="term" value="F:ATP binding"/>
    <property type="evidence" value="ECO:0007669"/>
    <property type="project" value="UniProtKB-KW"/>
</dbReference>
<dbReference type="GO" id="GO:0016787">
    <property type="term" value="F:hydrolase activity"/>
    <property type="evidence" value="ECO:0007669"/>
    <property type="project" value="UniProtKB-KW"/>
</dbReference>
<dbReference type="CDD" id="cd10224">
    <property type="entry name" value="ASKHA_NBD_actin"/>
    <property type="match status" value="1"/>
</dbReference>
<dbReference type="FunFam" id="3.30.420.40:FF:000291">
    <property type="entry name" value="Actin, alpha skeletal muscle"/>
    <property type="match status" value="1"/>
</dbReference>
<dbReference type="FunFam" id="3.90.640.10:FF:000047">
    <property type="entry name" value="Actin, alpha skeletal muscle"/>
    <property type="match status" value="1"/>
</dbReference>
<dbReference type="FunFam" id="3.30.420.40:FF:000404">
    <property type="entry name" value="Major actin"/>
    <property type="match status" value="1"/>
</dbReference>
<dbReference type="FunFam" id="3.30.420.40:FF:000058">
    <property type="entry name" value="Putative actin-related protein 5"/>
    <property type="match status" value="1"/>
</dbReference>
<dbReference type="Gene3D" id="3.30.420.40">
    <property type="match status" value="2"/>
</dbReference>
<dbReference type="Gene3D" id="3.90.640.10">
    <property type="entry name" value="Actin, Chain A, domain 4"/>
    <property type="match status" value="1"/>
</dbReference>
<dbReference type="InterPro" id="IPR004000">
    <property type="entry name" value="Actin"/>
</dbReference>
<dbReference type="InterPro" id="IPR020902">
    <property type="entry name" value="Actin/actin-like_CS"/>
</dbReference>
<dbReference type="InterPro" id="IPR004001">
    <property type="entry name" value="Actin_CS"/>
</dbReference>
<dbReference type="InterPro" id="IPR043129">
    <property type="entry name" value="ATPase_NBD"/>
</dbReference>
<dbReference type="PANTHER" id="PTHR11937">
    <property type="entry name" value="ACTIN"/>
    <property type="match status" value="1"/>
</dbReference>
<dbReference type="Pfam" id="PF00022">
    <property type="entry name" value="Actin"/>
    <property type="match status" value="1"/>
</dbReference>
<dbReference type="PRINTS" id="PR00190">
    <property type="entry name" value="ACTIN"/>
</dbReference>
<dbReference type="SMART" id="SM00268">
    <property type="entry name" value="ACTIN"/>
    <property type="match status" value="1"/>
</dbReference>
<dbReference type="SUPFAM" id="SSF53067">
    <property type="entry name" value="Actin-like ATPase domain"/>
    <property type="match status" value="2"/>
</dbReference>
<dbReference type="PROSITE" id="PS00406">
    <property type="entry name" value="ACTINS_1"/>
    <property type="match status" value="1"/>
</dbReference>
<dbReference type="PROSITE" id="PS00432">
    <property type="entry name" value="ACTINS_2"/>
    <property type="match status" value="1"/>
</dbReference>
<dbReference type="PROSITE" id="PS01132">
    <property type="entry name" value="ACTINS_ACT_LIKE"/>
    <property type="match status" value="1"/>
</dbReference>
<proteinExistence type="inferred from homology"/>
<feature type="chain" id="PRO_0000089034" description="Actin, cytoplasmic">
    <location>
        <begin position="1"/>
        <end position="376"/>
    </location>
</feature>
<accession>P10993</accession>